<gene>
    <name evidence="1" type="primary">kynU</name>
    <name type="ordered locus">PXO_00758</name>
</gene>
<accession>B2SIT8</accession>
<feature type="chain" id="PRO_0000357020" description="Kynureninase">
    <location>
        <begin position="1"/>
        <end position="423"/>
    </location>
</feature>
<feature type="binding site" evidence="1">
    <location>
        <position position="105"/>
    </location>
    <ligand>
        <name>pyridoxal 5'-phosphate</name>
        <dbReference type="ChEBI" id="CHEBI:597326"/>
    </ligand>
</feature>
<feature type="binding site" evidence="1">
    <location>
        <position position="106"/>
    </location>
    <ligand>
        <name>pyridoxal 5'-phosphate</name>
        <dbReference type="ChEBI" id="CHEBI:597326"/>
    </ligand>
</feature>
<feature type="binding site" evidence="1">
    <location>
        <begin position="133"/>
        <end position="136"/>
    </location>
    <ligand>
        <name>pyridoxal 5'-phosphate</name>
        <dbReference type="ChEBI" id="CHEBI:597326"/>
    </ligand>
</feature>
<feature type="binding site" evidence="1">
    <location>
        <position position="218"/>
    </location>
    <ligand>
        <name>pyridoxal 5'-phosphate</name>
        <dbReference type="ChEBI" id="CHEBI:597326"/>
    </ligand>
</feature>
<feature type="binding site" evidence="1">
    <location>
        <position position="221"/>
    </location>
    <ligand>
        <name>pyridoxal 5'-phosphate</name>
        <dbReference type="ChEBI" id="CHEBI:597326"/>
    </ligand>
</feature>
<feature type="binding site" evidence="1">
    <location>
        <position position="243"/>
    </location>
    <ligand>
        <name>pyridoxal 5'-phosphate</name>
        <dbReference type="ChEBI" id="CHEBI:597326"/>
    </ligand>
</feature>
<feature type="binding site" evidence="1">
    <location>
        <position position="273"/>
    </location>
    <ligand>
        <name>pyridoxal 5'-phosphate</name>
        <dbReference type="ChEBI" id="CHEBI:597326"/>
    </ligand>
</feature>
<feature type="binding site" evidence="1">
    <location>
        <position position="301"/>
    </location>
    <ligand>
        <name>pyridoxal 5'-phosphate</name>
        <dbReference type="ChEBI" id="CHEBI:597326"/>
    </ligand>
</feature>
<feature type="modified residue" description="N6-(pyridoxal phosphate)lysine" evidence="1">
    <location>
        <position position="244"/>
    </location>
</feature>
<comment type="function">
    <text evidence="1">Catalyzes the cleavage of L-kynurenine (L-Kyn) and L-3-hydroxykynurenine (L-3OHKyn) into anthranilic acid (AA) and 3-hydroxyanthranilic acid (3-OHAA), respectively.</text>
</comment>
<comment type="catalytic activity">
    <reaction evidence="1">
        <text>L-kynurenine + H2O = anthranilate + L-alanine + H(+)</text>
        <dbReference type="Rhea" id="RHEA:16813"/>
        <dbReference type="ChEBI" id="CHEBI:15377"/>
        <dbReference type="ChEBI" id="CHEBI:15378"/>
        <dbReference type="ChEBI" id="CHEBI:16567"/>
        <dbReference type="ChEBI" id="CHEBI:57959"/>
        <dbReference type="ChEBI" id="CHEBI:57972"/>
        <dbReference type="EC" id="3.7.1.3"/>
    </reaction>
</comment>
<comment type="catalytic activity">
    <reaction evidence="1">
        <text>3-hydroxy-L-kynurenine + H2O = 3-hydroxyanthranilate + L-alanine + H(+)</text>
        <dbReference type="Rhea" id="RHEA:25143"/>
        <dbReference type="ChEBI" id="CHEBI:15377"/>
        <dbReference type="ChEBI" id="CHEBI:15378"/>
        <dbReference type="ChEBI" id="CHEBI:36559"/>
        <dbReference type="ChEBI" id="CHEBI:57972"/>
        <dbReference type="ChEBI" id="CHEBI:58125"/>
        <dbReference type="EC" id="3.7.1.3"/>
    </reaction>
</comment>
<comment type="cofactor">
    <cofactor evidence="1">
        <name>pyridoxal 5'-phosphate</name>
        <dbReference type="ChEBI" id="CHEBI:597326"/>
    </cofactor>
</comment>
<comment type="pathway">
    <text evidence="1">Amino-acid degradation; L-kynurenine degradation; L-alanine and anthranilate from L-kynurenine: step 1/1.</text>
</comment>
<comment type="pathway">
    <text evidence="1">Cofactor biosynthesis; NAD(+) biosynthesis; quinolinate from L-kynurenine: step 2/3.</text>
</comment>
<comment type="subunit">
    <text evidence="1">Homodimer.</text>
</comment>
<comment type="similarity">
    <text evidence="1">Belongs to the kynureninase family.</text>
</comment>
<sequence>MTDLLSRAHADALDAADPLRSLRDAFVFPQHGDRDQTYLVGNSLGLQPRAARAMVDEVLDQWGTLGVEGHFTGPTQWLTYHQLVRDALARVVGAQPGEVVAMNTLSVNLHLMMASFYRPTHERGAILIEAGAFPSDRHAVESQLRLRGLDPATHLIEVEADEPNGTLSMAAIADAIAQHGPRLALVLWPGIQYRTGQAFDLAEIVRLARAQGAAVGCDLAHAVGNIPLTLHDDGVDFAVWCNYKYLNAGPGAVGGCFVHERHANSDLPRIAGWWGHEQQTRFRMDPQFVPSPGAEGWQLSNPPVLALAPLRASLTLFDQAGMAALRAKSERLTGHLEQLIRARVPQVLQIVTPAEPMRRGCQLSLRVAGGRAQGRSLFEHLHAAGVLGDWREPDVIRIAPVPLYNRFSDLHTFVGQVEAWAAA</sequence>
<reference key="1">
    <citation type="journal article" date="2008" name="BMC Genomics">
        <title>Genome sequence and rapid evolution of the rice pathogen Xanthomonas oryzae pv. oryzae PXO99A.</title>
        <authorList>
            <person name="Salzberg S.L."/>
            <person name="Sommer D.D."/>
            <person name="Schatz M.C."/>
            <person name="Phillippy A.M."/>
            <person name="Rabinowicz P.D."/>
            <person name="Tsuge S."/>
            <person name="Furutani A."/>
            <person name="Ochiai H."/>
            <person name="Delcher A.L."/>
            <person name="Kelley D."/>
            <person name="Madupu R."/>
            <person name="Puiu D."/>
            <person name="Radune D."/>
            <person name="Shumway M."/>
            <person name="Trapnell C."/>
            <person name="Aparna G."/>
            <person name="Jha G."/>
            <person name="Pandey A."/>
            <person name="Patil P.B."/>
            <person name="Ishihara H."/>
            <person name="Meyer D.F."/>
            <person name="Szurek B."/>
            <person name="Verdier V."/>
            <person name="Koebnik R."/>
            <person name="Dow J.M."/>
            <person name="Ryan R.P."/>
            <person name="Hirata H."/>
            <person name="Tsuyumu S."/>
            <person name="Won Lee S."/>
            <person name="Seo Y.-S."/>
            <person name="Sriariyanum M."/>
            <person name="Ronald P.C."/>
            <person name="Sonti R.V."/>
            <person name="Van Sluys M.-A."/>
            <person name="Leach J.E."/>
            <person name="White F.F."/>
            <person name="Bogdanove A.J."/>
        </authorList>
    </citation>
    <scope>NUCLEOTIDE SEQUENCE [LARGE SCALE GENOMIC DNA]</scope>
    <source>
        <strain>PXO99A</strain>
    </source>
</reference>
<keyword id="KW-0378">Hydrolase</keyword>
<keyword id="KW-0662">Pyridine nucleotide biosynthesis</keyword>
<keyword id="KW-0663">Pyridoxal phosphate</keyword>
<name>KYNU_XANOP</name>
<organism>
    <name type="scientific">Xanthomonas oryzae pv. oryzae (strain PXO99A)</name>
    <dbReference type="NCBI Taxonomy" id="360094"/>
    <lineage>
        <taxon>Bacteria</taxon>
        <taxon>Pseudomonadati</taxon>
        <taxon>Pseudomonadota</taxon>
        <taxon>Gammaproteobacteria</taxon>
        <taxon>Lysobacterales</taxon>
        <taxon>Lysobacteraceae</taxon>
        <taxon>Xanthomonas</taxon>
    </lineage>
</organism>
<evidence type="ECO:0000255" key="1">
    <source>
        <dbReference type="HAMAP-Rule" id="MF_01970"/>
    </source>
</evidence>
<protein>
    <recommendedName>
        <fullName evidence="1">Kynureninase</fullName>
        <ecNumber evidence="1">3.7.1.3</ecNumber>
    </recommendedName>
    <alternativeName>
        <fullName evidence="1">L-kynurenine hydrolase</fullName>
    </alternativeName>
</protein>
<proteinExistence type="inferred from homology"/>
<dbReference type="EC" id="3.7.1.3" evidence="1"/>
<dbReference type="EMBL" id="CP000967">
    <property type="protein sequence ID" value="ACD58733.1"/>
    <property type="molecule type" value="Genomic_DNA"/>
</dbReference>
<dbReference type="RefSeq" id="WP_012444804.1">
    <property type="nucleotide sequence ID" value="NC_010717.2"/>
</dbReference>
<dbReference type="SMR" id="B2SIT8"/>
<dbReference type="KEGG" id="xop:PXO_00758"/>
<dbReference type="eggNOG" id="COG3844">
    <property type="taxonomic scope" value="Bacteria"/>
</dbReference>
<dbReference type="HOGENOM" id="CLU_003433_4_0_6"/>
<dbReference type="UniPathway" id="UPA00253">
    <property type="reaction ID" value="UER00329"/>
</dbReference>
<dbReference type="UniPathway" id="UPA00334">
    <property type="reaction ID" value="UER00455"/>
</dbReference>
<dbReference type="Proteomes" id="UP000001740">
    <property type="component" value="Chromosome"/>
</dbReference>
<dbReference type="GO" id="GO:0005737">
    <property type="term" value="C:cytoplasm"/>
    <property type="evidence" value="ECO:0007669"/>
    <property type="project" value="InterPro"/>
</dbReference>
<dbReference type="GO" id="GO:0030429">
    <property type="term" value="F:kynureninase activity"/>
    <property type="evidence" value="ECO:0007669"/>
    <property type="project" value="UniProtKB-UniRule"/>
</dbReference>
<dbReference type="GO" id="GO:0030170">
    <property type="term" value="F:pyridoxal phosphate binding"/>
    <property type="evidence" value="ECO:0007669"/>
    <property type="project" value="UniProtKB-UniRule"/>
</dbReference>
<dbReference type="GO" id="GO:0043420">
    <property type="term" value="P:anthranilate metabolic process"/>
    <property type="evidence" value="ECO:0007669"/>
    <property type="project" value="TreeGrafter"/>
</dbReference>
<dbReference type="GO" id="GO:0097053">
    <property type="term" value="P:L-kynurenine catabolic process"/>
    <property type="evidence" value="ECO:0007669"/>
    <property type="project" value="UniProtKB-UniRule"/>
</dbReference>
<dbReference type="GO" id="GO:0019441">
    <property type="term" value="P:L-tryptophan catabolic process to kynurenine"/>
    <property type="evidence" value="ECO:0007669"/>
    <property type="project" value="TreeGrafter"/>
</dbReference>
<dbReference type="GO" id="GO:0009435">
    <property type="term" value="P:NAD biosynthetic process"/>
    <property type="evidence" value="ECO:0007669"/>
    <property type="project" value="UniProtKB-UniPathway"/>
</dbReference>
<dbReference type="GO" id="GO:0019805">
    <property type="term" value="P:quinolinate biosynthetic process"/>
    <property type="evidence" value="ECO:0007669"/>
    <property type="project" value="UniProtKB-UniRule"/>
</dbReference>
<dbReference type="FunFam" id="3.40.640.10:FF:000031">
    <property type="entry name" value="Kynureninase"/>
    <property type="match status" value="1"/>
</dbReference>
<dbReference type="Gene3D" id="3.90.1150.10">
    <property type="entry name" value="Aspartate Aminotransferase, domain 1"/>
    <property type="match status" value="1"/>
</dbReference>
<dbReference type="Gene3D" id="3.40.640.10">
    <property type="entry name" value="Type I PLP-dependent aspartate aminotransferase-like (Major domain)"/>
    <property type="match status" value="1"/>
</dbReference>
<dbReference type="HAMAP" id="MF_01970">
    <property type="entry name" value="Kynureninase"/>
    <property type="match status" value="1"/>
</dbReference>
<dbReference type="InterPro" id="IPR010111">
    <property type="entry name" value="Kynureninase"/>
</dbReference>
<dbReference type="InterPro" id="IPR015424">
    <property type="entry name" value="PyrdxlP-dep_Trfase"/>
</dbReference>
<dbReference type="InterPro" id="IPR015421">
    <property type="entry name" value="PyrdxlP-dep_Trfase_major"/>
</dbReference>
<dbReference type="InterPro" id="IPR015422">
    <property type="entry name" value="PyrdxlP-dep_Trfase_small"/>
</dbReference>
<dbReference type="NCBIfam" id="TIGR01814">
    <property type="entry name" value="kynureninase"/>
    <property type="match status" value="1"/>
</dbReference>
<dbReference type="PANTHER" id="PTHR14084">
    <property type="entry name" value="KYNURENINASE"/>
    <property type="match status" value="1"/>
</dbReference>
<dbReference type="PANTHER" id="PTHR14084:SF0">
    <property type="entry name" value="KYNURENINASE"/>
    <property type="match status" value="1"/>
</dbReference>
<dbReference type="Pfam" id="PF22580">
    <property type="entry name" value="KYNU_C"/>
    <property type="match status" value="1"/>
</dbReference>
<dbReference type="PIRSF" id="PIRSF038800">
    <property type="entry name" value="KYNU"/>
    <property type="match status" value="1"/>
</dbReference>
<dbReference type="SUPFAM" id="SSF53383">
    <property type="entry name" value="PLP-dependent transferases"/>
    <property type="match status" value="1"/>
</dbReference>